<organism>
    <name type="scientific">Escherichia coli (strain K12)</name>
    <dbReference type="NCBI Taxonomy" id="83333"/>
    <lineage>
        <taxon>Bacteria</taxon>
        <taxon>Pseudomonadati</taxon>
        <taxon>Pseudomonadota</taxon>
        <taxon>Gammaproteobacteria</taxon>
        <taxon>Enterobacterales</taxon>
        <taxon>Enterobacteriaceae</taxon>
        <taxon>Escherichia</taxon>
    </lineage>
</organism>
<evidence type="ECO:0000255" key="1"/>
<evidence type="ECO:0000269" key="2">
    <source>
    </source>
</evidence>
<evidence type="ECO:0000305" key="3"/>
<reference key="1">
    <citation type="thesis" date="1992" institute="University of Cambridge" country="United Kingdom">
        <authorList>
            <person name="Roberts P.E."/>
        </authorList>
    </citation>
    <scope>NUCLEOTIDE SEQUENCE [GENOMIC DNA]</scope>
    <scope>CHARACTERIZATION</scope>
</reference>
<reference key="2">
    <citation type="journal article" date="1997" name="Science">
        <title>The complete genome sequence of Escherichia coli K-12.</title>
        <authorList>
            <person name="Blattner F.R."/>
            <person name="Plunkett G. III"/>
            <person name="Bloch C.A."/>
            <person name="Perna N.T."/>
            <person name="Burland V."/>
            <person name="Riley M."/>
            <person name="Collado-Vides J."/>
            <person name="Glasner J.D."/>
            <person name="Rode C.K."/>
            <person name="Mayhew G.F."/>
            <person name="Gregor J."/>
            <person name="Davis N.W."/>
            <person name="Kirkpatrick H.A."/>
            <person name="Goeden M.A."/>
            <person name="Rose D.J."/>
            <person name="Mau B."/>
            <person name="Shao Y."/>
        </authorList>
    </citation>
    <scope>NUCLEOTIDE SEQUENCE [LARGE SCALE GENOMIC DNA]</scope>
    <source>
        <strain>K12 / MG1655 / ATCC 47076</strain>
    </source>
</reference>
<reference key="3">
    <citation type="journal article" date="2006" name="Mol. Syst. Biol.">
        <title>Highly accurate genome sequences of Escherichia coli K-12 strains MG1655 and W3110.</title>
        <authorList>
            <person name="Hayashi K."/>
            <person name="Morooka N."/>
            <person name="Yamamoto Y."/>
            <person name="Fujita K."/>
            <person name="Isono K."/>
            <person name="Choi S."/>
            <person name="Ohtsubo E."/>
            <person name="Baba T."/>
            <person name="Wanner B.L."/>
            <person name="Mori H."/>
            <person name="Horiuchi T."/>
        </authorList>
    </citation>
    <scope>NUCLEOTIDE SEQUENCE [LARGE SCALE GENOMIC DNA]</scope>
    <source>
        <strain>K12 / W3110 / ATCC 27325 / DSM 5911</strain>
    </source>
</reference>
<reference key="4">
    <citation type="journal article" date="2005" name="Science">
        <title>Global topology analysis of the Escherichia coli inner membrane proteome.</title>
        <authorList>
            <person name="Daley D.O."/>
            <person name="Rapp M."/>
            <person name="Granseth E."/>
            <person name="Melen K."/>
            <person name="Drew D."/>
            <person name="von Heijne G."/>
        </authorList>
    </citation>
    <scope>SUBCELLULAR LOCATION</scope>
    <source>
        <strain>K12 / MG1655 / ATCC 47076</strain>
    </source>
</reference>
<keyword id="KW-0997">Cell inner membrane</keyword>
<keyword id="KW-1003">Cell membrane</keyword>
<keyword id="KW-0472">Membrane</keyword>
<keyword id="KW-1185">Reference proteome</keyword>
<keyword id="KW-0762">Sugar transport</keyword>
<keyword id="KW-0769">Symport</keyword>
<keyword id="KW-0812">Transmembrane</keyword>
<keyword id="KW-1133">Transmembrane helix</keyword>
<keyword id="KW-0813">Transport</keyword>
<sequence>MPDAKKQGRSNKAMTFFVCFLAALAGLLFGLDIGVIAGALPFIADEFQITSHTQEWVVSSMMFGAAVGAVGSGWLSFKLGRKKSLMIGAILFVAGSLFSAAAPNVEVLILSRVLLGLAVGVASYTAPLYLSEIAPEKIRGSMISMYQLMITIGILGAYLSDTAFSYTGAWRWMLGVIIIPAILLLIGVFFLPDSPRWFAAKRRFVDAERVLLRLRDTSAEAKRELDEIRESLQVKQSGWALFKENSNFRRAVFLGVLLQVMQQFTGMNVIMYYAPKIFELAGYTNTTEQMWGTVIVGLTNVLATFIAIGLVDRWGRKPTLTLGFLVMAAGMGVLGTMMHIGIHSPSAQYFAIAMLLMFIVGFAMSAGPLIWVLCSEIQPLKGRDFGITCSTATNWIANMIVGATFLTMLNTLGNANTFWVYAALNVLFILLTLWLVPETKHVSLEHIERNLMKGRKLREIGAHD</sequence>
<name>GALP_ECOLI</name>
<dbReference type="EMBL" id="U28377">
    <property type="protein sequence ID" value="AAA69110.1"/>
    <property type="molecule type" value="Genomic_DNA"/>
</dbReference>
<dbReference type="EMBL" id="U00096">
    <property type="protein sequence ID" value="AAC75980.1"/>
    <property type="molecule type" value="Genomic_DNA"/>
</dbReference>
<dbReference type="EMBL" id="AP009048">
    <property type="protein sequence ID" value="BAE77006.1"/>
    <property type="molecule type" value="Genomic_DNA"/>
</dbReference>
<dbReference type="PIR" id="F65079">
    <property type="entry name" value="F65079"/>
</dbReference>
<dbReference type="RefSeq" id="NP_417418.1">
    <property type="nucleotide sequence ID" value="NC_000913.3"/>
</dbReference>
<dbReference type="RefSeq" id="WP_001112301.1">
    <property type="nucleotide sequence ID" value="NZ_STEB01000001.1"/>
</dbReference>
<dbReference type="SMR" id="P0AEP1"/>
<dbReference type="BioGRID" id="4260658">
    <property type="interactions" value="17"/>
</dbReference>
<dbReference type="FunCoup" id="P0AEP1">
    <property type="interactions" value="316"/>
</dbReference>
<dbReference type="STRING" id="511145.b2943"/>
<dbReference type="TCDB" id="2.A.1.1.1">
    <property type="family name" value="the major facilitator superfamily (mfs)"/>
</dbReference>
<dbReference type="PaxDb" id="511145-b2943"/>
<dbReference type="EnsemblBacteria" id="AAC75980">
    <property type="protein sequence ID" value="AAC75980"/>
    <property type="gene ID" value="b2943"/>
</dbReference>
<dbReference type="GeneID" id="93779054"/>
<dbReference type="GeneID" id="947434"/>
<dbReference type="KEGG" id="ecj:JW2910"/>
<dbReference type="KEGG" id="eco:b2943"/>
<dbReference type="KEGG" id="ecoc:C3026_16110"/>
<dbReference type="PATRIC" id="fig|1411691.4.peg.3790"/>
<dbReference type="EchoBASE" id="EB2068"/>
<dbReference type="eggNOG" id="COG2814">
    <property type="taxonomic scope" value="Bacteria"/>
</dbReference>
<dbReference type="HOGENOM" id="CLU_001265_30_5_6"/>
<dbReference type="InParanoid" id="P0AEP1"/>
<dbReference type="OMA" id="VMVVFAC"/>
<dbReference type="OrthoDB" id="5368493at2"/>
<dbReference type="PhylomeDB" id="P0AEP1"/>
<dbReference type="BioCyc" id="EcoCyc:GALP-MONOMER"/>
<dbReference type="BioCyc" id="MetaCyc:GALP-MONOMER"/>
<dbReference type="PRO" id="PR:P0AEP1"/>
<dbReference type="Proteomes" id="UP000000625">
    <property type="component" value="Chromosome"/>
</dbReference>
<dbReference type="GO" id="GO:0016020">
    <property type="term" value="C:membrane"/>
    <property type="evidence" value="ECO:0000318"/>
    <property type="project" value="GO_Central"/>
</dbReference>
<dbReference type="GO" id="GO:0005886">
    <property type="term" value="C:plasma membrane"/>
    <property type="evidence" value="ECO:0000314"/>
    <property type="project" value="EcoCyc"/>
</dbReference>
<dbReference type="GO" id="GO:0015517">
    <property type="term" value="F:galactose:proton symporter activity"/>
    <property type="evidence" value="ECO:0000314"/>
    <property type="project" value="EcoCyc"/>
</dbReference>
<dbReference type="GO" id="GO:0015293">
    <property type="term" value="F:symporter activity"/>
    <property type="evidence" value="ECO:0000318"/>
    <property type="project" value="GO_Central"/>
</dbReference>
<dbReference type="GO" id="GO:0015757">
    <property type="term" value="P:galactose transmembrane transport"/>
    <property type="evidence" value="ECO:0000314"/>
    <property type="project" value="EcoCyc"/>
</dbReference>
<dbReference type="GO" id="GO:0055085">
    <property type="term" value="P:transmembrane transport"/>
    <property type="evidence" value="ECO:0000318"/>
    <property type="project" value="GO_Central"/>
</dbReference>
<dbReference type="CDD" id="cd17315">
    <property type="entry name" value="MFS_GLUT_like"/>
    <property type="match status" value="1"/>
</dbReference>
<dbReference type="FunFam" id="1.20.1250.20:FF:000008">
    <property type="entry name" value="Galactose-proton symporter (Galactose transporter)"/>
    <property type="match status" value="1"/>
</dbReference>
<dbReference type="Gene3D" id="1.20.1250.20">
    <property type="entry name" value="MFS general substrate transporter like domains"/>
    <property type="match status" value="1"/>
</dbReference>
<dbReference type="InterPro" id="IPR020846">
    <property type="entry name" value="MFS_dom"/>
</dbReference>
<dbReference type="InterPro" id="IPR005828">
    <property type="entry name" value="MFS_sugar_transport-like"/>
</dbReference>
<dbReference type="InterPro" id="IPR036259">
    <property type="entry name" value="MFS_trans_sf"/>
</dbReference>
<dbReference type="InterPro" id="IPR050814">
    <property type="entry name" value="Myo-inositol_Transporter"/>
</dbReference>
<dbReference type="InterPro" id="IPR003663">
    <property type="entry name" value="Sugar/inositol_transpt"/>
</dbReference>
<dbReference type="InterPro" id="IPR005829">
    <property type="entry name" value="Sugar_transporter_CS"/>
</dbReference>
<dbReference type="NCBIfam" id="TIGR00879">
    <property type="entry name" value="SP"/>
    <property type="match status" value="1"/>
</dbReference>
<dbReference type="PANTHER" id="PTHR48020">
    <property type="entry name" value="PROTON MYO-INOSITOL COTRANSPORTER"/>
    <property type="match status" value="1"/>
</dbReference>
<dbReference type="PANTHER" id="PTHR48020:SF12">
    <property type="entry name" value="PROTON MYO-INOSITOL COTRANSPORTER"/>
    <property type="match status" value="1"/>
</dbReference>
<dbReference type="Pfam" id="PF00083">
    <property type="entry name" value="Sugar_tr"/>
    <property type="match status" value="1"/>
</dbReference>
<dbReference type="PRINTS" id="PR00171">
    <property type="entry name" value="SUGRTRNSPORT"/>
</dbReference>
<dbReference type="SUPFAM" id="SSF103473">
    <property type="entry name" value="MFS general substrate transporter"/>
    <property type="match status" value="1"/>
</dbReference>
<dbReference type="PROSITE" id="PS50850">
    <property type="entry name" value="MFS"/>
    <property type="match status" value="1"/>
</dbReference>
<dbReference type="PROSITE" id="PS00216">
    <property type="entry name" value="SUGAR_TRANSPORT_1"/>
    <property type="match status" value="1"/>
</dbReference>
<dbReference type="PROSITE" id="PS00217">
    <property type="entry name" value="SUGAR_TRANSPORT_2"/>
    <property type="match status" value="1"/>
</dbReference>
<accession>P0AEP1</accession>
<accession>P37021</accession>
<accession>Q2M9Q0</accession>
<proteinExistence type="evidence at protein level"/>
<protein>
    <recommendedName>
        <fullName>Galactose-proton symporter</fullName>
    </recommendedName>
    <alternativeName>
        <fullName>Galactose transporter</fullName>
    </alternativeName>
</protein>
<feature type="chain" id="PRO_0000050292" description="Galactose-proton symporter">
    <location>
        <begin position="1"/>
        <end position="464"/>
    </location>
</feature>
<feature type="topological domain" description="Cytoplasmic" evidence="1">
    <location>
        <begin position="1"/>
        <end position="15"/>
    </location>
</feature>
<feature type="transmembrane region" description="Helical; Name=1" evidence="1">
    <location>
        <begin position="16"/>
        <end position="36"/>
    </location>
</feature>
<feature type="topological domain" description="Periplasmic" evidence="1">
    <location>
        <begin position="37"/>
        <end position="56"/>
    </location>
</feature>
<feature type="transmembrane region" description="Helical; Name=2" evidence="1">
    <location>
        <begin position="57"/>
        <end position="77"/>
    </location>
</feature>
<feature type="topological domain" description="Cytoplasmic" evidence="1">
    <location>
        <begin position="78"/>
        <end position="84"/>
    </location>
</feature>
<feature type="transmembrane region" description="Helical; Name=3" evidence="1">
    <location>
        <begin position="85"/>
        <end position="105"/>
    </location>
</feature>
<feature type="topological domain" description="Periplasmic" evidence="1">
    <location>
        <begin position="106"/>
        <end position="112"/>
    </location>
</feature>
<feature type="transmembrane region" description="Helical; Name=4" evidence="1">
    <location>
        <begin position="113"/>
        <end position="133"/>
    </location>
</feature>
<feature type="topological domain" description="Cytoplasmic" evidence="1">
    <location>
        <begin position="134"/>
        <end position="139"/>
    </location>
</feature>
<feature type="transmembrane region" description="Helical; Name=5" evidence="1">
    <location>
        <begin position="140"/>
        <end position="160"/>
    </location>
</feature>
<feature type="topological domain" description="Periplasmic" evidence="1">
    <location>
        <begin position="161"/>
        <end position="171"/>
    </location>
</feature>
<feature type="transmembrane region" description="Helical; Name=6" evidence="1">
    <location>
        <begin position="172"/>
        <end position="192"/>
    </location>
</feature>
<feature type="topological domain" description="Cytoplasmic" evidence="1">
    <location>
        <begin position="193"/>
        <end position="250"/>
    </location>
</feature>
<feature type="transmembrane region" description="Helical; Name=7" evidence="1">
    <location>
        <begin position="251"/>
        <end position="271"/>
    </location>
</feature>
<feature type="topological domain" description="Periplasmic" evidence="1">
    <location>
        <begin position="272"/>
        <end position="290"/>
    </location>
</feature>
<feature type="transmembrane region" description="Helical; Name=8" evidence="1">
    <location>
        <begin position="291"/>
        <end position="311"/>
    </location>
</feature>
<feature type="topological domain" description="Cytoplasmic" evidence="1">
    <location>
        <begin position="312"/>
        <end position="321"/>
    </location>
</feature>
<feature type="transmembrane region" description="Helical; Name=9" evidence="1">
    <location>
        <begin position="322"/>
        <end position="342"/>
    </location>
</feature>
<feature type="topological domain" description="Periplasmic" evidence="1">
    <location>
        <begin position="343"/>
        <end position="351"/>
    </location>
</feature>
<feature type="transmembrane region" description="Helical; Name=10" evidence="1">
    <location>
        <begin position="352"/>
        <end position="372"/>
    </location>
</feature>
<feature type="topological domain" description="Cytoplasmic" evidence="1">
    <location>
        <begin position="373"/>
        <end position="394"/>
    </location>
</feature>
<feature type="transmembrane region" description="Helical; Name=11" evidence="1">
    <location>
        <begin position="395"/>
        <end position="415"/>
    </location>
</feature>
<feature type="topological domain" description="Periplasmic" evidence="1">
    <location>
        <position position="416"/>
    </location>
</feature>
<feature type="transmembrane region" description="Helical; Name=12" evidence="1">
    <location>
        <begin position="417"/>
        <end position="437"/>
    </location>
</feature>
<feature type="topological domain" description="Cytoplasmic" evidence="1">
    <location>
        <begin position="438"/>
        <end position="464"/>
    </location>
</feature>
<comment type="function">
    <text>Uptake of galactose across the boundary membrane with the concomitant transport of protons into the cell (symport system).</text>
</comment>
<comment type="subcellular location">
    <subcellularLocation>
        <location evidence="2">Cell inner membrane</location>
        <topology evidence="2">Multi-pass membrane protein</topology>
    </subcellularLocation>
</comment>
<comment type="similarity">
    <text evidence="3">Belongs to the major facilitator superfamily. Sugar transporter (TC 2.A.1.1) family.</text>
</comment>
<gene>
    <name type="primary">galP</name>
    <name type="ordered locus">b2943</name>
    <name type="ordered locus">JW2910</name>
</gene>